<organism>
    <name type="scientific">Salmonella gallinarum (strain 287/91 / NCTC 13346)</name>
    <dbReference type="NCBI Taxonomy" id="550538"/>
    <lineage>
        <taxon>Bacteria</taxon>
        <taxon>Pseudomonadati</taxon>
        <taxon>Pseudomonadota</taxon>
        <taxon>Gammaproteobacteria</taxon>
        <taxon>Enterobacterales</taxon>
        <taxon>Enterobacteriaceae</taxon>
        <taxon>Salmonella</taxon>
    </lineage>
</organism>
<name>ADD_SALG2</name>
<sequence>MIDITLPLTDIHRHLDGNIRAQTILDLGRQFNIALPAQTLETLIPHVQVTSTEPDLVSFLTKLDWGVKVLASLDACRRVAFENIEDAARNGLHYVELRFSPGYMAMAHQLPIAGVVEAVIDGVRDGCNTFGVEARLIGIMSRTFGEAACLQELDALLAHRENITALDLAGDELGFPGSLFLSHFNRARDAGWHITVHAGEAAGPESIWQAIRELGAERIGHGVKAVEDRALMDFLVQQRIGIESCLTSNIQTSTIASLADHPLKTFLEHGVLASLNTDDPAVQGVDIIHEYHVAAPAAGLSREQIRQAQINGLEIAFLSDGEKRALREKVAAA</sequence>
<accession>B5RAJ6</accession>
<gene>
    <name evidence="1" type="primary">add</name>
    <name type="ordered locus">SG1655</name>
</gene>
<feature type="chain" id="PRO_1000128863" description="Adenosine deaminase">
    <location>
        <begin position="1"/>
        <end position="333"/>
    </location>
</feature>
<feature type="active site" description="Proton donor" evidence="1">
    <location>
        <position position="200"/>
    </location>
</feature>
<feature type="binding site" evidence="1">
    <location>
        <position position="12"/>
    </location>
    <ligand>
        <name>Zn(2+)</name>
        <dbReference type="ChEBI" id="CHEBI:29105"/>
        <note>catalytic</note>
    </ligand>
</feature>
<feature type="binding site" evidence="1">
    <location>
        <position position="14"/>
    </location>
    <ligand>
        <name>substrate</name>
    </ligand>
</feature>
<feature type="binding site" evidence="1">
    <location>
        <position position="14"/>
    </location>
    <ligand>
        <name>Zn(2+)</name>
        <dbReference type="ChEBI" id="CHEBI:29105"/>
        <note>catalytic</note>
    </ligand>
</feature>
<feature type="binding site" evidence="1">
    <location>
        <position position="16"/>
    </location>
    <ligand>
        <name>substrate</name>
    </ligand>
</feature>
<feature type="binding site" evidence="1">
    <location>
        <position position="170"/>
    </location>
    <ligand>
        <name>substrate</name>
    </ligand>
</feature>
<feature type="binding site" evidence="1">
    <location>
        <position position="197"/>
    </location>
    <ligand>
        <name>Zn(2+)</name>
        <dbReference type="ChEBI" id="CHEBI:29105"/>
        <note>catalytic</note>
    </ligand>
</feature>
<feature type="binding site" evidence="1">
    <location>
        <position position="278"/>
    </location>
    <ligand>
        <name>Zn(2+)</name>
        <dbReference type="ChEBI" id="CHEBI:29105"/>
        <note>catalytic</note>
    </ligand>
</feature>
<feature type="binding site" evidence="1">
    <location>
        <position position="279"/>
    </location>
    <ligand>
        <name>substrate</name>
    </ligand>
</feature>
<feature type="site" description="Important for catalytic activity" evidence="1">
    <location>
        <position position="221"/>
    </location>
</feature>
<dbReference type="EC" id="3.5.4.4" evidence="1"/>
<dbReference type="EMBL" id="AM933173">
    <property type="protein sequence ID" value="CAR37514.1"/>
    <property type="molecule type" value="Genomic_DNA"/>
</dbReference>
<dbReference type="RefSeq" id="WP_000565570.1">
    <property type="nucleotide sequence ID" value="NC_011274.1"/>
</dbReference>
<dbReference type="SMR" id="B5RAJ6"/>
<dbReference type="KEGG" id="seg:SG1655"/>
<dbReference type="HOGENOM" id="CLU_039228_0_2_6"/>
<dbReference type="Proteomes" id="UP000008321">
    <property type="component" value="Chromosome"/>
</dbReference>
<dbReference type="GO" id="GO:0005829">
    <property type="term" value="C:cytosol"/>
    <property type="evidence" value="ECO:0007669"/>
    <property type="project" value="TreeGrafter"/>
</dbReference>
<dbReference type="GO" id="GO:0046936">
    <property type="term" value="F:2'-deoxyadenosine deaminase activity"/>
    <property type="evidence" value="ECO:0007669"/>
    <property type="project" value="RHEA"/>
</dbReference>
<dbReference type="GO" id="GO:0004000">
    <property type="term" value="F:adenosine deaminase activity"/>
    <property type="evidence" value="ECO:0007669"/>
    <property type="project" value="UniProtKB-UniRule"/>
</dbReference>
<dbReference type="GO" id="GO:0008270">
    <property type="term" value="F:zinc ion binding"/>
    <property type="evidence" value="ECO:0007669"/>
    <property type="project" value="UniProtKB-UniRule"/>
</dbReference>
<dbReference type="GO" id="GO:0006154">
    <property type="term" value="P:adenosine catabolic process"/>
    <property type="evidence" value="ECO:0007669"/>
    <property type="project" value="TreeGrafter"/>
</dbReference>
<dbReference type="GO" id="GO:0043103">
    <property type="term" value="P:hypoxanthine salvage"/>
    <property type="evidence" value="ECO:0007669"/>
    <property type="project" value="TreeGrafter"/>
</dbReference>
<dbReference type="GO" id="GO:0046103">
    <property type="term" value="P:inosine biosynthetic process"/>
    <property type="evidence" value="ECO:0007669"/>
    <property type="project" value="TreeGrafter"/>
</dbReference>
<dbReference type="GO" id="GO:0009117">
    <property type="term" value="P:nucleotide metabolic process"/>
    <property type="evidence" value="ECO:0007669"/>
    <property type="project" value="UniProtKB-KW"/>
</dbReference>
<dbReference type="GO" id="GO:0009168">
    <property type="term" value="P:purine ribonucleoside monophosphate biosynthetic process"/>
    <property type="evidence" value="ECO:0007669"/>
    <property type="project" value="UniProtKB-UniRule"/>
</dbReference>
<dbReference type="CDD" id="cd01320">
    <property type="entry name" value="ADA"/>
    <property type="match status" value="1"/>
</dbReference>
<dbReference type="FunFam" id="3.20.20.140:FF:000009">
    <property type="entry name" value="Adenosine deaminase"/>
    <property type="match status" value="1"/>
</dbReference>
<dbReference type="Gene3D" id="3.20.20.140">
    <property type="entry name" value="Metal-dependent hydrolases"/>
    <property type="match status" value="1"/>
</dbReference>
<dbReference type="HAMAP" id="MF_00540">
    <property type="entry name" value="A_deaminase"/>
    <property type="match status" value="1"/>
</dbReference>
<dbReference type="InterPro" id="IPR006650">
    <property type="entry name" value="A/AMP_deam_AS"/>
</dbReference>
<dbReference type="InterPro" id="IPR028893">
    <property type="entry name" value="A_deaminase"/>
</dbReference>
<dbReference type="InterPro" id="IPR001365">
    <property type="entry name" value="A_deaminase_dom"/>
</dbReference>
<dbReference type="InterPro" id="IPR006330">
    <property type="entry name" value="Ado/ade_deaminase"/>
</dbReference>
<dbReference type="InterPro" id="IPR032466">
    <property type="entry name" value="Metal_Hydrolase"/>
</dbReference>
<dbReference type="NCBIfam" id="TIGR01430">
    <property type="entry name" value="aden_deam"/>
    <property type="match status" value="1"/>
</dbReference>
<dbReference type="NCBIfam" id="NF006846">
    <property type="entry name" value="PRK09358.1-1"/>
    <property type="match status" value="1"/>
</dbReference>
<dbReference type="PANTHER" id="PTHR11409">
    <property type="entry name" value="ADENOSINE DEAMINASE"/>
    <property type="match status" value="1"/>
</dbReference>
<dbReference type="PANTHER" id="PTHR11409:SF43">
    <property type="entry name" value="ADENOSINE DEAMINASE"/>
    <property type="match status" value="1"/>
</dbReference>
<dbReference type="Pfam" id="PF00962">
    <property type="entry name" value="A_deaminase"/>
    <property type="match status" value="1"/>
</dbReference>
<dbReference type="SUPFAM" id="SSF51556">
    <property type="entry name" value="Metallo-dependent hydrolases"/>
    <property type="match status" value="1"/>
</dbReference>
<dbReference type="PROSITE" id="PS00485">
    <property type="entry name" value="A_DEAMINASE"/>
    <property type="match status" value="1"/>
</dbReference>
<evidence type="ECO:0000255" key="1">
    <source>
        <dbReference type="HAMAP-Rule" id="MF_00540"/>
    </source>
</evidence>
<comment type="function">
    <text evidence="1">Catalyzes the hydrolytic deamination of adenosine and 2-deoxyadenosine.</text>
</comment>
<comment type="catalytic activity">
    <reaction evidence="1">
        <text>adenosine + H2O + H(+) = inosine + NH4(+)</text>
        <dbReference type="Rhea" id="RHEA:24408"/>
        <dbReference type="ChEBI" id="CHEBI:15377"/>
        <dbReference type="ChEBI" id="CHEBI:15378"/>
        <dbReference type="ChEBI" id="CHEBI:16335"/>
        <dbReference type="ChEBI" id="CHEBI:17596"/>
        <dbReference type="ChEBI" id="CHEBI:28938"/>
        <dbReference type="EC" id="3.5.4.4"/>
    </reaction>
    <physiologicalReaction direction="left-to-right" evidence="1">
        <dbReference type="Rhea" id="RHEA:24409"/>
    </physiologicalReaction>
</comment>
<comment type="catalytic activity">
    <reaction evidence="1">
        <text>2'-deoxyadenosine + H2O + H(+) = 2'-deoxyinosine + NH4(+)</text>
        <dbReference type="Rhea" id="RHEA:28190"/>
        <dbReference type="ChEBI" id="CHEBI:15377"/>
        <dbReference type="ChEBI" id="CHEBI:15378"/>
        <dbReference type="ChEBI" id="CHEBI:17256"/>
        <dbReference type="ChEBI" id="CHEBI:28938"/>
        <dbReference type="ChEBI" id="CHEBI:28997"/>
        <dbReference type="EC" id="3.5.4.4"/>
    </reaction>
    <physiologicalReaction direction="left-to-right" evidence="1">
        <dbReference type="Rhea" id="RHEA:28191"/>
    </physiologicalReaction>
</comment>
<comment type="cofactor">
    <cofactor evidence="1">
        <name>Zn(2+)</name>
        <dbReference type="ChEBI" id="CHEBI:29105"/>
    </cofactor>
    <text evidence="1">Binds 1 zinc ion per subunit.</text>
</comment>
<comment type="similarity">
    <text evidence="1">Belongs to the metallo-dependent hydrolases superfamily. Adenosine and AMP deaminases family. Adenosine deaminase subfamily.</text>
</comment>
<keyword id="KW-0378">Hydrolase</keyword>
<keyword id="KW-0479">Metal-binding</keyword>
<keyword id="KW-0546">Nucleotide metabolism</keyword>
<keyword id="KW-0862">Zinc</keyword>
<proteinExistence type="inferred from homology"/>
<reference key="1">
    <citation type="journal article" date="2008" name="Genome Res.">
        <title>Comparative genome analysis of Salmonella enteritidis PT4 and Salmonella gallinarum 287/91 provides insights into evolutionary and host adaptation pathways.</title>
        <authorList>
            <person name="Thomson N.R."/>
            <person name="Clayton D.J."/>
            <person name="Windhorst D."/>
            <person name="Vernikos G."/>
            <person name="Davidson S."/>
            <person name="Churcher C."/>
            <person name="Quail M.A."/>
            <person name="Stevens M."/>
            <person name="Jones M.A."/>
            <person name="Watson M."/>
            <person name="Barron A."/>
            <person name="Layton A."/>
            <person name="Pickard D."/>
            <person name="Kingsley R.A."/>
            <person name="Bignell A."/>
            <person name="Clark L."/>
            <person name="Harris B."/>
            <person name="Ormond D."/>
            <person name="Abdellah Z."/>
            <person name="Brooks K."/>
            <person name="Cherevach I."/>
            <person name="Chillingworth T."/>
            <person name="Woodward J."/>
            <person name="Norberczak H."/>
            <person name="Lord A."/>
            <person name="Arrowsmith C."/>
            <person name="Jagels K."/>
            <person name="Moule S."/>
            <person name="Mungall K."/>
            <person name="Saunders M."/>
            <person name="Whitehead S."/>
            <person name="Chabalgoity J.A."/>
            <person name="Maskell D."/>
            <person name="Humphreys T."/>
            <person name="Roberts M."/>
            <person name="Barrow P.A."/>
            <person name="Dougan G."/>
            <person name="Parkhill J."/>
        </authorList>
    </citation>
    <scope>NUCLEOTIDE SEQUENCE [LARGE SCALE GENOMIC DNA]</scope>
    <source>
        <strain>287/91 / NCTC 13346</strain>
    </source>
</reference>
<protein>
    <recommendedName>
        <fullName evidence="1">Adenosine deaminase</fullName>
        <ecNumber evidence="1">3.5.4.4</ecNumber>
    </recommendedName>
    <alternativeName>
        <fullName evidence="1">Adenosine aminohydrolase</fullName>
    </alternativeName>
</protein>